<name>C1R_MACFA</name>
<keyword id="KW-0068">Autocatalytic cleavage</keyword>
<keyword id="KW-0106">Calcium</keyword>
<keyword id="KW-0180">Complement pathway</keyword>
<keyword id="KW-1015">Disulfide bond</keyword>
<keyword id="KW-0245">EGF-like domain</keyword>
<keyword id="KW-0325">Glycoprotein</keyword>
<keyword id="KW-0378">Hydrolase</keyword>
<keyword id="KW-0379">Hydroxylation</keyword>
<keyword id="KW-0391">Immunity</keyword>
<keyword id="KW-0399">Innate immunity</keyword>
<keyword id="KW-0479">Metal-binding</keyword>
<keyword id="KW-0597">Phosphoprotein</keyword>
<keyword id="KW-0645">Protease</keyword>
<keyword id="KW-1185">Reference proteome</keyword>
<keyword id="KW-0677">Repeat</keyword>
<keyword id="KW-0964">Secreted</keyword>
<keyword id="KW-0720">Serine protease</keyword>
<keyword id="KW-0732">Signal</keyword>
<keyword id="KW-0768">Sushi</keyword>
<organism>
    <name type="scientific">Macaca fascicularis</name>
    <name type="common">Crab-eating macaque</name>
    <name type="synonym">Cynomolgus monkey</name>
    <dbReference type="NCBI Taxonomy" id="9541"/>
    <lineage>
        <taxon>Eukaryota</taxon>
        <taxon>Metazoa</taxon>
        <taxon>Chordata</taxon>
        <taxon>Craniata</taxon>
        <taxon>Vertebrata</taxon>
        <taxon>Euteleostomi</taxon>
        <taxon>Mammalia</taxon>
        <taxon>Eutheria</taxon>
        <taxon>Euarchontoglires</taxon>
        <taxon>Primates</taxon>
        <taxon>Haplorrhini</taxon>
        <taxon>Catarrhini</taxon>
        <taxon>Cercopithecidae</taxon>
        <taxon>Cercopithecinae</taxon>
        <taxon>Macaca</taxon>
    </lineage>
</organism>
<proteinExistence type="evidence at transcript level"/>
<comment type="function">
    <text evidence="1">Serine protease component of the complement C1 complex, a multiprotein complex that initiates the classical pathway of the complement system, a cascade of proteins that leads to phagocytosis and breakdown of pathogens and signaling that strengthens the adaptive immune system. C1R catalyzes the first enzymatic step in the classical complement pathway: it is activated by the C1Q subcomplex of the C1 complex, which associates with IgG or IgM immunoglobulins complexed with antigens to form antigen-antibody complexes on the surface of pathogens. Immunoglobulin-binding promotes the autocatalytic cleavage and activation of C1R. Activated C1R then cleaves and activates C1S, the second protease of the classical complement pathway. It is unclear if C1R activates C1S within single, strained C1 complexes or between neighboring C1 complexes on surfaces.</text>
</comment>
<comment type="catalytic activity">
    <reaction evidence="1">
        <text>Selective cleavage of Lys(or Arg)-|-Ile bond in complement subcomponent C1s to form the active form of C1s (EC 3.4.21.42).</text>
        <dbReference type="EC" id="3.4.21.41"/>
    </reaction>
</comment>
<comment type="activity regulation">
    <text evidence="1">Activated by the C1Q subcomplex of the C1 complex following C1Q binding to immunoglobulins (IgG or IgM) complexed with antigens to form antigen-antibody complexes on the surface of pathogens. Immunoglobulin-binding promotes autoactivation of C1R, which results in the cleavage of the Arg-Ile bond in the catalytic domain.</text>
</comment>
<comment type="subunit">
    <text evidence="1">Core component of the complement C1 complex, a calcium-dependent complex composed of 1 molecule of the C1Q subcomplex, 2 molecules of C1R and 2 molecules of C1S. The C1Q subcomplex is composed 18 subunits: 3 chains of C1QA, C1QB, and C1QC trimerize to form 6 collagen-like triple helices connected to six globular ligand-recognition modules. Within the C1 complex, C1R is a dimer of identical chains, each of which is activated by cleavage into two chains, heavy and light, connected by disulfide bonds.</text>
</comment>
<comment type="subcellular location">
    <subcellularLocation>
        <location evidence="1">Secreted</location>
    </subcellularLocation>
    <subcellularLocation>
        <location evidence="1">Cell surface</location>
    </subcellularLocation>
    <text evidence="1">Recruited to the surface of pathogens by the C1Q subcomplex.</text>
</comment>
<comment type="domain">
    <text evidence="1">The CUB domain 2 shows a compact folded structure in the presence of Ca(2+), whereas it has a flexible, disordered conformation in the absence of Ca(2+). Ca(2+) could provide a switch between the folded and disordered forms; low Ca(2+) could provide flexibility to promote autoprocessing and activation of CIR.</text>
</comment>
<comment type="PTM">
    <text evidence="1">Cleaved and activated by autocatalytic processing to generate Complement C1r subcomponent heavy and light chains that are connected by disulfide bonds.</text>
</comment>
<comment type="PTM">
    <text evidence="1">The iron and 2-oxoglutarate dependent 3-hydroxylation of aspartate and asparagine is (R) stereospecific within EGF domains.</text>
</comment>
<comment type="similarity">
    <text evidence="4">Belongs to the peptidase S1 family.</text>
</comment>
<gene>
    <name type="primary">C1R</name>
    <name type="ORF">QccE-15711</name>
</gene>
<sequence>MWLLYLLVPALFCRAGGSIPIPQKLFGEVTSPLFPKPYPNSFETTTVITVPTGYRVKLVFQHFDLEPSEGCFYDYVKISADKKNLGRFCGQLGSPLGNPPGKKEFMSQGNKMLLTFHTDFSNEENGTIMFYKGFLAYYQAVDLDECASQSESGEKDLQPQCQHLCHNYVGGYFCSCRPGYELQEDRHSCQPECSSELYTEASGYISSLEYPRSYPPDLRCNYSIRVERGLTLHLKFLEPFEIDDHQQVHCPYDQLQIYANGKNIGEFCGKQRPPDFDTSSNAVDLLFFTDESGDSRGWKLRYTTEIIKCPQPKTLDEFTVIQNLQPQYQFRDYFIATCKLGYQLIEGNQVLHSFTAVCQDDGTWHRAMPRCKIKDCGQPRNLPNGAFRYTTTMGVNTYKARIQYYCHEPYYKMQTRAGSKESEQGLYTCTAQGIWKNEQKGEKIPRCLPVCGKPVNPVEQRQRIIGGQKAKMGNFPWQVFTNIHGRGGGALLGDRWILTAAHTLYPKEHEAQSNASLDVFLGHTNVEELMKLANHPIRRVSIHPDYRQDESHNFEGDIALLELENSVTLGPNLLPICLPDNETFYDLGLMGYVSGFGVMEEKIAHDLRFVRLPVANRKDCETWLRGKNRLDVFSQNMFCAGHPSLKQDACQGDSGGVFAVRDPNTDRWIATGIVSWGIGCSKGYGFYTKVLNYVDWIKKEMEEED</sequence>
<dbReference type="EC" id="3.4.21.41" evidence="1"/>
<dbReference type="EMBL" id="AB169667">
    <property type="protein sequence ID" value="BAE01748.1"/>
    <property type="molecule type" value="mRNA"/>
</dbReference>
<dbReference type="SMR" id="Q4R577"/>
<dbReference type="STRING" id="9541.ENSMFAP00000039403"/>
<dbReference type="MEROPS" id="S01.192"/>
<dbReference type="GlyCosmos" id="Q4R577">
    <property type="glycosylation" value="4 sites, No reported glycans"/>
</dbReference>
<dbReference type="eggNOG" id="KOG3627">
    <property type="taxonomic scope" value="Eukaryota"/>
</dbReference>
<dbReference type="Proteomes" id="UP000233100">
    <property type="component" value="Unplaced"/>
</dbReference>
<dbReference type="GO" id="GO:0072562">
    <property type="term" value="C:blood microparticle"/>
    <property type="evidence" value="ECO:0007669"/>
    <property type="project" value="TreeGrafter"/>
</dbReference>
<dbReference type="GO" id="GO:0005509">
    <property type="term" value="F:calcium ion binding"/>
    <property type="evidence" value="ECO:0007669"/>
    <property type="project" value="InterPro"/>
</dbReference>
<dbReference type="GO" id="GO:0004252">
    <property type="term" value="F:serine-type endopeptidase activity"/>
    <property type="evidence" value="ECO:0007669"/>
    <property type="project" value="UniProtKB-EC"/>
</dbReference>
<dbReference type="GO" id="GO:0006958">
    <property type="term" value="P:complement activation, classical pathway"/>
    <property type="evidence" value="ECO:0007669"/>
    <property type="project" value="UniProtKB-KW"/>
</dbReference>
<dbReference type="GO" id="GO:0045087">
    <property type="term" value="P:innate immune response"/>
    <property type="evidence" value="ECO:0007669"/>
    <property type="project" value="UniProtKB-KW"/>
</dbReference>
<dbReference type="GO" id="GO:0031638">
    <property type="term" value="P:zymogen activation"/>
    <property type="evidence" value="ECO:0007669"/>
    <property type="project" value="TreeGrafter"/>
</dbReference>
<dbReference type="CDD" id="cd00033">
    <property type="entry name" value="CCP"/>
    <property type="match status" value="2"/>
</dbReference>
<dbReference type="CDD" id="cd00041">
    <property type="entry name" value="CUB"/>
    <property type="match status" value="2"/>
</dbReference>
<dbReference type="CDD" id="cd00054">
    <property type="entry name" value="EGF_CA"/>
    <property type="match status" value="1"/>
</dbReference>
<dbReference type="CDD" id="cd00190">
    <property type="entry name" value="Tryp_SPc"/>
    <property type="match status" value="1"/>
</dbReference>
<dbReference type="FunFam" id="2.10.25.10:FF:000419">
    <property type="entry name" value="Complement C1r subcomponent"/>
    <property type="match status" value="1"/>
</dbReference>
<dbReference type="FunFam" id="2.10.70.10:FF:000040">
    <property type="entry name" value="Complement C1r subcomponent"/>
    <property type="match status" value="1"/>
</dbReference>
<dbReference type="FunFam" id="2.40.10.10:FF:000035">
    <property type="entry name" value="Complement C1r subcomponent"/>
    <property type="match status" value="1"/>
</dbReference>
<dbReference type="FunFam" id="2.40.10.10:FF:000037">
    <property type="entry name" value="Complement C1r subcomponent"/>
    <property type="match status" value="1"/>
</dbReference>
<dbReference type="FunFam" id="2.60.120.290:FF:000028">
    <property type="entry name" value="Complement C1r subcomponent"/>
    <property type="match status" value="1"/>
</dbReference>
<dbReference type="FunFam" id="2.10.70.10:FF:000016">
    <property type="entry name" value="Mannan-binding lectin serine protease 1"/>
    <property type="match status" value="1"/>
</dbReference>
<dbReference type="FunFam" id="2.60.120.290:FF:000006">
    <property type="entry name" value="Mannan-binding lectin serine protease 1"/>
    <property type="match status" value="1"/>
</dbReference>
<dbReference type="Gene3D" id="2.10.70.10">
    <property type="entry name" value="Complement Module, domain 1"/>
    <property type="match status" value="2"/>
</dbReference>
<dbReference type="Gene3D" id="2.10.25.10">
    <property type="entry name" value="Laminin"/>
    <property type="match status" value="1"/>
</dbReference>
<dbReference type="Gene3D" id="2.60.120.290">
    <property type="entry name" value="Spermadhesin, CUB domain"/>
    <property type="match status" value="2"/>
</dbReference>
<dbReference type="Gene3D" id="2.40.10.10">
    <property type="entry name" value="Trypsin-like serine proteases"/>
    <property type="match status" value="3"/>
</dbReference>
<dbReference type="InterPro" id="IPR000859">
    <property type="entry name" value="CUB_dom"/>
</dbReference>
<dbReference type="InterPro" id="IPR001881">
    <property type="entry name" value="EGF-like_Ca-bd_dom"/>
</dbReference>
<dbReference type="InterPro" id="IPR000742">
    <property type="entry name" value="EGF-like_dom"/>
</dbReference>
<dbReference type="InterPro" id="IPR018097">
    <property type="entry name" value="EGF_Ca-bd_CS"/>
</dbReference>
<dbReference type="InterPro" id="IPR024175">
    <property type="entry name" value="Pept_S1A_C1r/C1S/mannan-bd"/>
</dbReference>
<dbReference type="InterPro" id="IPR009003">
    <property type="entry name" value="Peptidase_S1_PA"/>
</dbReference>
<dbReference type="InterPro" id="IPR043504">
    <property type="entry name" value="Peptidase_S1_PA_chymotrypsin"/>
</dbReference>
<dbReference type="InterPro" id="IPR001314">
    <property type="entry name" value="Peptidase_S1A"/>
</dbReference>
<dbReference type="InterPro" id="IPR035914">
    <property type="entry name" value="Sperma_CUB_dom_sf"/>
</dbReference>
<dbReference type="InterPro" id="IPR035976">
    <property type="entry name" value="Sushi/SCR/CCP_sf"/>
</dbReference>
<dbReference type="InterPro" id="IPR000436">
    <property type="entry name" value="Sushi_SCR_CCP_dom"/>
</dbReference>
<dbReference type="InterPro" id="IPR001254">
    <property type="entry name" value="Trypsin_dom"/>
</dbReference>
<dbReference type="InterPro" id="IPR033116">
    <property type="entry name" value="TRYPSIN_SER"/>
</dbReference>
<dbReference type="PANTHER" id="PTHR24255:SF25">
    <property type="entry name" value="COMPLEMENT C1R SUBCOMPONENT"/>
    <property type="match status" value="1"/>
</dbReference>
<dbReference type="PANTHER" id="PTHR24255">
    <property type="entry name" value="COMPLEMENT COMPONENT 1, S SUBCOMPONENT-RELATED"/>
    <property type="match status" value="1"/>
</dbReference>
<dbReference type="Pfam" id="PF00431">
    <property type="entry name" value="CUB"/>
    <property type="match status" value="2"/>
</dbReference>
<dbReference type="Pfam" id="PF14670">
    <property type="entry name" value="FXa_inhibition"/>
    <property type="match status" value="1"/>
</dbReference>
<dbReference type="Pfam" id="PF00084">
    <property type="entry name" value="Sushi"/>
    <property type="match status" value="2"/>
</dbReference>
<dbReference type="Pfam" id="PF00089">
    <property type="entry name" value="Trypsin"/>
    <property type="match status" value="1"/>
</dbReference>
<dbReference type="PIRSF" id="PIRSF001155">
    <property type="entry name" value="C1r_C1s_MASP"/>
    <property type="match status" value="1"/>
</dbReference>
<dbReference type="PRINTS" id="PR00722">
    <property type="entry name" value="CHYMOTRYPSIN"/>
</dbReference>
<dbReference type="SMART" id="SM00032">
    <property type="entry name" value="CCP"/>
    <property type="match status" value="2"/>
</dbReference>
<dbReference type="SMART" id="SM00042">
    <property type="entry name" value="CUB"/>
    <property type="match status" value="2"/>
</dbReference>
<dbReference type="SMART" id="SM00181">
    <property type="entry name" value="EGF"/>
    <property type="match status" value="1"/>
</dbReference>
<dbReference type="SMART" id="SM00179">
    <property type="entry name" value="EGF_CA"/>
    <property type="match status" value="1"/>
</dbReference>
<dbReference type="SMART" id="SM00020">
    <property type="entry name" value="Tryp_SPc"/>
    <property type="match status" value="1"/>
</dbReference>
<dbReference type="SUPFAM" id="SSF57535">
    <property type="entry name" value="Complement control module/SCR domain"/>
    <property type="match status" value="2"/>
</dbReference>
<dbReference type="SUPFAM" id="SSF57196">
    <property type="entry name" value="EGF/Laminin"/>
    <property type="match status" value="1"/>
</dbReference>
<dbReference type="SUPFAM" id="SSF49854">
    <property type="entry name" value="Spermadhesin, CUB domain"/>
    <property type="match status" value="2"/>
</dbReference>
<dbReference type="SUPFAM" id="SSF50494">
    <property type="entry name" value="Trypsin-like serine proteases"/>
    <property type="match status" value="1"/>
</dbReference>
<dbReference type="PROSITE" id="PS00010">
    <property type="entry name" value="ASX_HYDROXYL"/>
    <property type="match status" value="1"/>
</dbReference>
<dbReference type="PROSITE" id="PS01180">
    <property type="entry name" value="CUB"/>
    <property type="match status" value="2"/>
</dbReference>
<dbReference type="PROSITE" id="PS01186">
    <property type="entry name" value="EGF_2"/>
    <property type="match status" value="1"/>
</dbReference>
<dbReference type="PROSITE" id="PS01187">
    <property type="entry name" value="EGF_CA"/>
    <property type="match status" value="1"/>
</dbReference>
<dbReference type="PROSITE" id="PS50923">
    <property type="entry name" value="SUSHI"/>
    <property type="match status" value="2"/>
</dbReference>
<dbReference type="PROSITE" id="PS50240">
    <property type="entry name" value="TRYPSIN_DOM"/>
    <property type="match status" value="1"/>
</dbReference>
<dbReference type="PROSITE" id="PS00135">
    <property type="entry name" value="TRYPSIN_SER"/>
    <property type="match status" value="1"/>
</dbReference>
<accession>Q4R577</accession>
<evidence type="ECO:0000250" key="1">
    <source>
        <dbReference type="UniProtKB" id="P00736"/>
    </source>
</evidence>
<evidence type="ECO:0000255" key="2"/>
<evidence type="ECO:0000255" key="3">
    <source>
        <dbReference type="PROSITE-ProRule" id="PRU00059"/>
    </source>
</evidence>
<evidence type="ECO:0000255" key="4">
    <source>
        <dbReference type="PROSITE-ProRule" id="PRU00274"/>
    </source>
</evidence>
<evidence type="ECO:0000255" key="5">
    <source>
        <dbReference type="PROSITE-ProRule" id="PRU00302"/>
    </source>
</evidence>
<reference key="1">
    <citation type="submission" date="2005-06" db="EMBL/GenBank/DDBJ databases">
        <title>DNA sequences of macaque genes expressed in brain or testis and its evolutionary implications.</title>
        <authorList>
            <consortium name="International consortium for macaque cDNA sequencing and analysis"/>
        </authorList>
    </citation>
    <scope>NUCLEOTIDE SEQUENCE [LARGE SCALE MRNA]</scope>
    <source>
        <tissue>Brain cortex</tissue>
    </source>
</reference>
<feature type="signal peptide" evidence="1">
    <location>
        <begin position="1"/>
        <end position="17"/>
    </location>
</feature>
<feature type="chain" id="PRO_0000285864" description="Complement C1r subcomponent">
    <location>
        <begin position="18"/>
        <end position="705"/>
    </location>
</feature>
<feature type="chain" id="PRO_0000285865" description="Complement C1r subcomponent heavy chain" evidence="1">
    <location>
        <begin position="18"/>
        <end position="463"/>
    </location>
</feature>
<feature type="chain" id="PRO_0000285866" description="Complement C1r subcomponent light chain" evidence="1">
    <location>
        <begin position="464"/>
        <end position="705"/>
    </location>
</feature>
<feature type="domain" description="CUB 1" evidence="3">
    <location>
        <begin position="18"/>
        <end position="141"/>
    </location>
</feature>
<feature type="domain" description="EGF-like; calcium-binding" evidence="2">
    <location>
        <begin position="142"/>
        <end position="190"/>
    </location>
</feature>
<feature type="domain" description="CUB 2" evidence="3">
    <location>
        <begin position="193"/>
        <end position="305"/>
    </location>
</feature>
<feature type="domain" description="Sushi 1" evidence="5">
    <location>
        <begin position="307"/>
        <end position="373"/>
    </location>
</feature>
<feature type="domain" description="Sushi 2" evidence="5">
    <location>
        <begin position="374"/>
        <end position="449"/>
    </location>
</feature>
<feature type="domain" description="Peptidase S1" evidence="4">
    <location>
        <begin position="464"/>
        <end position="702"/>
    </location>
</feature>
<feature type="active site" description="Charge relay system" evidence="1">
    <location>
        <position position="502"/>
    </location>
</feature>
<feature type="active site" description="Charge relay system" evidence="1">
    <location>
        <position position="557"/>
    </location>
</feature>
<feature type="active site" description="Charge relay system" evidence="1">
    <location>
        <position position="654"/>
    </location>
</feature>
<feature type="binding site" evidence="1">
    <location>
        <position position="66"/>
    </location>
    <ligand>
        <name>Ca(2+)</name>
        <dbReference type="ChEBI" id="CHEBI:29108"/>
        <label>1</label>
    </ligand>
</feature>
<feature type="binding site" evidence="1">
    <location>
        <position position="74"/>
    </location>
    <ligand>
        <name>Ca(2+)</name>
        <dbReference type="ChEBI" id="CHEBI:29108"/>
        <label>1</label>
    </ligand>
</feature>
<feature type="binding site" evidence="1">
    <location>
        <position position="119"/>
    </location>
    <ligand>
        <name>Ca(2+)</name>
        <dbReference type="ChEBI" id="CHEBI:29108"/>
        <label>1</label>
    </ligand>
</feature>
<feature type="binding site" evidence="1">
    <location>
        <position position="142"/>
    </location>
    <ligand>
        <name>Ca(2+)</name>
        <dbReference type="ChEBI" id="CHEBI:29108"/>
        <label>2</label>
    </ligand>
</feature>
<feature type="binding site" evidence="1">
    <location>
        <position position="143"/>
    </location>
    <ligand>
        <name>Ca(2+)</name>
        <dbReference type="ChEBI" id="CHEBI:29108"/>
        <label>2</label>
    </ligand>
</feature>
<feature type="binding site" evidence="1">
    <location>
        <position position="145"/>
    </location>
    <ligand>
        <name>Ca(2+)</name>
        <dbReference type="ChEBI" id="CHEBI:29108"/>
        <label>2</label>
    </ligand>
</feature>
<feature type="binding site" evidence="1">
    <location>
        <position position="167"/>
    </location>
    <ligand>
        <name>Ca(2+)</name>
        <dbReference type="ChEBI" id="CHEBI:29108"/>
        <label>2</label>
    </ligand>
</feature>
<feature type="binding site" evidence="1">
    <location>
        <position position="168"/>
    </location>
    <ligand>
        <name>Ca(2+)</name>
        <dbReference type="ChEBI" id="CHEBI:29108"/>
        <label>2</label>
    </ligand>
</feature>
<feature type="binding site" evidence="1">
    <location>
        <position position="171"/>
    </location>
    <ligand>
        <name>Ca(2+)</name>
        <dbReference type="ChEBI" id="CHEBI:29108"/>
        <label>2</label>
    </ligand>
</feature>
<feature type="binding site" evidence="1">
    <location>
        <position position="243"/>
    </location>
    <ligand>
        <name>Ca(2+)</name>
        <dbReference type="ChEBI" id="CHEBI:29108"/>
        <label>3</label>
    </ligand>
</feature>
<feature type="binding site" evidence="1">
    <location>
        <position position="253"/>
    </location>
    <ligand>
        <name>Ca(2+)</name>
        <dbReference type="ChEBI" id="CHEBI:29108"/>
        <label>3</label>
    </ligand>
</feature>
<feature type="binding site" evidence="1">
    <location>
        <position position="290"/>
    </location>
    <ligand>
        <name>Ca(2+)</name>
        <dbReference type="ChEBI" id="CHEBI:29108"/>
        <label>3</label>
    </ligand>
</feature>
<feature type="binding site" evidence="1">
    <location>
        <position position="294"/>
    </location>
    <ligand>
        <name>Ca(2+)</name>
        <dbReference type="ChEBI" id="CHEBI:29108"/>
        <label>3</label>
    </ligand>
</feature>
<feature type="site" description="Cleavage; by autolysis" evidence="1">
    <location>
        <begin position="463"/>
        <end position="464"/>
    </location>
</feature>
<feature type="modified residue" description="(3R)-3-hydroxyasparagine" evidence="1">
    <location>
        <position position="167"/>
    </location>
</feature>
<feature type="modified residue" description="Phosphoserine; by CK2" evidence="1">
    <location>
        <position position="206"/>
    </location>
</feature>
<feature type="glycosylation site" description="N-linked (GlcNAc...) asparagine" evidence="2">
    <location>
        <position position="125"/>
    </location>
</feature>
<feature type="glycosylation site" description="N-linked (GlcNAc...) asparagine" evidence="2">
    <location>
        <position position="221"/>
    </location>
</feature>
<feature type="glycosylation site" description="N-linked (GlcNAc...) asparagine" evidence="2">
    <location>
        <position position="514"/>
    </location>
</feature>
<feature type="glycosylation site" description="N-linked (GlcNAc...) asparagine" evidence="2">
    <location>
        <position position="581"/>
    </location>
</feature>
<feature type="disulfide bond" evidence="1">
    <location>
        <begin position="71"/>
        <end position="89"/>
    </location>
</feature>
<feature type="disulfide bond" evidence="1">
    <location>
        <begin position="146"/>
        <end position="165"/>
    </location>
</feature>
<feature type="disulfide bond" evidence="1">
    <location>
        <begin position="161"/>
        <end position="174"/>
    </location>
</feature>
<feature type="disulfide bond" evidence="1">
    <location>
        <begin position="176"/>
        <end position="189"/>
    </location>
</feature>
<feature type="disulfide bond" evidence="1">
    <location>
        <begin position="193"/>
        <end position="220"/>
    </location>
</feature>
<feature type="disulfide bond" evidence="1">
    <location>
        <begin position="250"/>
        <end position="268"/>
    </location>
</feature>
<feature type="disulfide bond" evidence="1">
    <location>
        <begin position="309"/>
        <end position="358"/>
    </location>
</feature>
<feature type="disulfide bond" evidence="1">
    <location>
        <begin position="338"/>
        <end position="371"/>
    </location>
</feature>
<feature type="disulfide bond" evidence="1">
    <location>
        <begin position="376"/>
        <end position="429"/>
    </location>
</feature>
<feature type="disulfide bond" evidence="1">
    <location>
        <begin position="406"/>
        <end position="447"/>
    </location>
</feature>
<feature type="disulfide bond" description="Interchain (between heavy and light chains)" evidence="3 4 5">
    <location>
        <begin position="451"/>
        <end position="577"/>
    </location>
</feature>
<feature type="disulfide bond" evidence="1">
    <location>
        <begin position="620"/>
        <end position="639"/>
    </location>
</feature>
<feature type="disulfide bond" evidence="1">
    <location>
        <begin position="650"/>
        <end position="680"/>
    </location>
</feature>
<protein>
    <recommendedName>
        <fullName>Complement C1r subcomponent</fullName>
        <ecNumber evidence="1">3.4.21.41</ecNumber>
    </recommendedName>
    <alternativeName>
        <fullName>Complement component 1 subcomponent r</fullName>
    </alternativeName>
    <component>
        <recommendedName>
            <fullName>Complement C1r subcomponent heavy chain</fullName>
        </recommendedName>
    </component>
    <component>
        <recommendedName>
            <fullName>Complement C1r subcomponent light chain</fullName>
        </recommendedName>
    </component>
</protein>